<organism>
    <name type="scientific">Acidiphilium cryptum (strain JF-5)</name>
    <dbReference type="NCBI Taxonomy" id="349163"/>
    <lineage>
        <taxon>Bacteria</taxon>
        <taxon>Pseudomonadati</taxon>
        <taxon>Pseudomonadota</taxon>
        <taxon>Alphaproteobacteria</taxon>
        <taxon>Acetobacterales</taxon>
        <taxon>Acidocellaceae</taxon>
        <taxon>Acidiphilium</taxon>
    </lineage>
</organism>
<feature type="chain" id="PRO_1000003096" description="Ribosome-recycling factor">
    <location>
        <begin position="1"/>
        <end position="188"/>
    </location>
</feature>
<name>RRF_ACICJ</name>
<keyword id="KW-0963">Cytoplasm</keyword>
<keyword id="KW-0648">Protein biosynthesis</keyword>
<keyword id="KW-1185">Reference proteome</keyword>
<proteinExistence type="inferred from homology"/>
<reference key="1">
    <citation type="submission" date="2007-05" db="EMBL/GenBank/DDBJ databases">
        <title>Complete sequence of chromosome of Acidiphilium cryptum JF-5.</title>
        <authorList>
            <consortium name="US DOE Joint Genome Institute"/>
            <person name="Copeland A."/>
            <person name="Lucas S."/>
            <person name="Lapidus A."/>
            <person name="Barry K."/>
            <person name="Detter J.C."/>
            <person name="Glavina del Rio T."/>
            <person name="Hammon N."/>
            <person name="Israni S."/>
            <person name="Dalin E."/>
            <person name="Tice H."/>
            <person name="Pitluck S."/>
            <person name="Sims D."/>
            <person name="Brettin T."/>
            <person name="Bruce D."/>
            <person name="Han C."/>
            <person name="Schmutz J."/>
            <person name="Larimer F."/>
            <person name="Land M."/>
            <person name="Hauser L."/>
            <person name="Kyrpides N."/>
            <person name="Kim E."/>
            <person name="Magnuson T."/>
            <person name="Richardson P."/>
        </authorList>
    </citation>
    <scope>NUCLEOTIDE SEQUENCE [LARGE SCALE GENOMIC DNA]</scope>
    <source>
        <strain>JF-5</strain>
    </source>
</reference>
<gene>
    <name evidence="1" type="primary">frr</name>
    <name type="ordered locus">Acry_2554</name>
</gene>
<sequence>MDADLDTLLADLQRRMDGAMETLKREFSGLRTGRANPALLDPVKVEAYGTLMPLNQVATVAVPESRMLTVQVWDRGMVNATVAAIRDCGLGLNPQPDGQLIRVPLPLLTEERRNELARAAGKYAEGARVAVRGVRRDGMETIKGFEKKHQIGEDQGRDWADRVQKLTDATIKKIDELLVEKEKDIRQV</sequence>
<protein>
    <recommendedName>
        <fullName evidence="1">Ribosome-recycling factor</fullName>
        <shortName evidence="1">RRF</shortName>
    </recommendedName>
    <alternativeName>
        <fullName evidence="1">Ribosome-releasing factor</fullName>
    </alternativeName>
</protein>
<accession>A5G1L3</accession>
<evidence type="ECO:0000255" key="1">
    <source>
        <dbReference type="HAMAP-Rule" id="MF_00040"/>
    </source>
</evidence>
<comment type="function">
    <text evidence="1">Responsible for the release of ribosomes from messenger RNA at the termination of protein biosynthesis. May increase the efficiency of translation by recycling ribosomes from one round of translation to another.</text>
</comment>
<comment type="subcellular location">
    <subcellularLocation>
        <location evidence="1">Cytoplasm</location>
    </subcellularLocation>
</comment>
<comment type="similarity">
    <text evidence="1">Belongs to the RRF family.</text>
</comment>
<dbReference type="EMBL" id="CP000697">
    <property type="protein sequence ID" value="ABQ31745.1"/>
    <property type="molecule type" value="Genomic_DNA"/>
</dbReference>
<dbReference type="RefSeq" id="WP_007421638.1">
    <property type="nucleotide sequence ID" value="NC_009484.1"/>
</dbReference>
<dbReference type="SMR" id="A5G1L3"/>
<dbReference type="STRING" id="349163.Acry_2554"/>
<dbReference type="KEGG" id="acr:Acry_2554"/>
<dbReference type="eggNOG" id="COG0233">
    <property type="taxonomic scope" value="Bacteria"/>
</dbReference>
<dbReference type="HOGENOM" id="CLU_073981_2_0_5"/>
<dbReference type="Proteomes" id="UP000000245">
    <property type="component" value="Chromosome"/>
</dbReference>
<dbReference type="GO" id="GO:0005829">
    <property type="term" value="C:cytosol"/>
    <property type="evidence" value="ECO:0007669"/>
    <property type="project" value="GOC"/>
</dbReference>
<dbReference type="GO" id="GO:0043023">
    <property type="term" value="F:ribosomal large subunit binding"/>
    <property type="evidence" value="ECO:0007669"/>
    <property type="project" value="TreeGrafter"/>
</dbReference>
<dbReference type="GO" id="GO:0002184">
    <property type="term" value="P:cytoplasmic translational termination"/>
    <property type="evidence" value="ECO:0007669"/>
    <property type="project" value="TreeGrafter"/>
</dbReference>
<dbReference type="CDD" id="cd00520">
    <property type="entry name" value="RRF"/>
    <property type="match status" value="1"/>
</dbReference>
<dbReference type="FunFam" id="1.10.132.20:FF:000001">
    <property type="entry name" value="Ribosome-recycling factor"/>
    <property type="match status" value="1"/>
</dbReference>
<dbReference type="FunFam" id="3.30.1360.40:FF:000001">
    <property type="entry name" value="Ribosome-recycling factor"/>
    <property type="match status" value="1"/>
</dbReference>
<dbReference type="Gene3D" id="3.30.1360.40">
    <property type="match status" value="1"/>
</dbReference>
<dbReference type="Gene3D" id="1.10.132.20">
    <property type="entry name" value="Ribosome-recycling factor"/>
    <property type="match status" value="1"/>
</dbReference>
<dbReference type="HAMAP" id="MF_00040">
    <property type="entry name" value="RRF"/>
    <property type="match status" value="1"/>
</dbReference>
<dbReference type="InterPro" id="IPR002661">
    <property type="entry name" value="Ribosome_recyc_fac"/>
</dbReference>
<dbReference type="InterPro" id="IPR023584">
    <property type="entry name" value="Ribosome_recyc_fac_dom"/>
</dbReference>
<dbReference type="InterPro" id="IPR036191">
    <property type="entry name" value="RRF_sf"/>
</dbReference>
<dbReference type="NCBIfam" id="TIGR00496">
    <property type="entry name" value="frr"/>
    <property type="match status" value="1"/>
</dbReference>
<dbReference type="PANTHER" id="PTHR20982:SF3">
    <property type="entry name" value="MITOCHONDRIAL RIBOSOME RECYCLING FACTOR PSEUDO 1"/>
    <property type="match status" value="1"/>
</dbReference>
<dbReference type="PANTHER" id="PTHR20982">
    <property type="entry name" value="RIBOSOME RECYCLING FACTOR"/>
    <property type="match status" value="1"/>
</dbReference>
<dbReference type="Pfam" id="PF01765">
    <property type="entry name" value="RRF"/>
    <property type="match status" value="1"/>
</dbReference>
<dbReference type="SUPFAM" id="SSF55194">
    <property type="entry name" value="Ribosome recycling factor, RRF"/>
    <property type="match status" value="1"/>
</dbReference>